<protein>
    <recommendedName>
        <fullName>Acetolactate synthase isozyme 2 small subunit</fullName>
        <ecNumber>2.2.1.6</ecNumber>
    </recommendedName>
    <alternativeName>
        <fullName>ALS-II</fullName>
    </alternativeName>
    <alternativeName>
        <fullName>Acetohydroxy-acid synthase II small subunit</fullName>
        <shortName>AHAS-II</shortName>
    </alternativeName>
</protein>
<name>ILVM_ECOL6</name>
<proteinExistence type="inferred from homology"/>
<evidence type="ECO:0000250" key="1"/>
<evidence type="ECO:0000255" key="2">
    <source>
        <dbReference type="PROSITE-ProRule" id="PRU01007"/>
    </source>
</evidence>
<sequence>MMQHQVNVSARFNPETLERVLRVVRHRGFHVCSMNMAAASDAQNINIELTVASPRSVDLLFSQLNKLVDVAHVAICQSTTTSQQIRA</sequence>
<keyword id="KW-0028">Amino-acid biosynthesis</keyword>
<keyword id="KW-0100">Branched-chain amino acid biosynthesis</keyword>
<keyword id="KW-0460">Magnesium</keyword>
<keyword id="KW-1185">Reference proteome</keyword>
<keyword id="KW-0786">Thiamine pyrophosphate</keyword>
<keyword id="KW-0808">Transferase</keyword>
<organism>
    <name type="scientific">Escherichia coli O6:H1 (strain CFT073 / ATCC 700928 / UPEC)</name>
    <dbReference type="NCBI Taxonomy" id="199310"/>
    <lineage>
        <taxon>Bacteria</taxon>
        <taxon>Pseudomonadati</taxon>
        <taxon>Pseudomonadota</taxon>
        <taxon>Gammaproteobacteria</taxon>
        <taxon>Enterobacterales</taxon>
        <taxon>Enterobacteriaceae</taxon>
        <taxon>Escherichia</taxon>
    </lineage>
</organism>
<dbReference type="EC" id="2.2.1.6"/>
<dbReference type="EMBL" id="AE014075">
    <property type="protein sequence ID" value="AAN83123.1"/>
    <property type="molecule type" value="Genomic_DNA"/>
</dbReference>
<dbReference type="RefSeq" id="WP_000983255.1">
    <property type="nucleotide sequence ID" value="NZ_CP051263.1"/>
</dbReference>
<dbReference type="SMR" id="P0ADG2"/>
<dbReference type="STRING" id="199310.c4691"/>
<dbReference type="GeneID" id="93778176"/>
<dbReference type="KEGG" id="ecc:c4691"/>
<dbReference type="eggNOG" id="COG3978">
    <property type="taxonomic scope" value="Bacteria"/>
</dbReference>
<dbReference type="HOGENOM" id="CLU_183627_0_0_6"/>
<dbReference type="BioCyc" id="ECOL199310:C4691-MONOMER"/>
<dbReference type="UniPathway" id="UPA00047">
    <property type="reaction ID" value="UER00055"/>
</dbReference>
<dbReference type="UniPathway" id="UPA00049">
    <property type="reaction ID" value="UER00059"/>
</dbReference>
<dbReference type="Proteomes" id="UP000001410">
    <property type="component" value="Chromosome"/>
</dbReference>
<dbReference type="GO" id="GO:0003984">
    <property type="term" value="F:acetolactate synthase activity"/>
    <property type="evidence" value="ECO:0007669"/>
    <property type="project" value="UniProtKB-EC"/>
</dbReference>
<dbReference type="GO" id="GO:0009097">
    <property type="term" value="P:isoleucine biosynthetic process"/>
    <property type="evidence" value="ECO:0007669"/>
    <property type="project" value="UniProtKB-UniPathway"/>
</dbReference>
<dbReference type="GO" id="GO:0009099">
    <property type="term" value="P:L-valine biosynthetic process"/>
    <property type="evidence" value="ECO:0007669"/>
    <property type="project" value="UniProtKB-UniPathway"/>
</dbReference>
<dbReference type="FunFam" id="3.30.70.260:FF:000009">
    <property type="entry name" value="Acetolactate synthase isozyme 2 small subunit"/>
    <property type="match status" value="1"/>
</dbReference>
<dbReference type="Gene3D" id="3.30.70.260">
    <property type="match status" value="1"/>
</dbReference>
<dbReference type="InterPro" id="IPR045865">
    <property type="entry name" value="ACT-like_dom_sf"/>
</dbReference>
<dbReference type="InterPro" id="IPR002912">
    <property type="entry name" value="ACT_dom"/>
</dbReference>
<dbReference type="NCBIfam" id="NF008362">
    <property type="entry name" value="PRK11152.1"/>
    <property type="match status" value="1"/>
</dbReference>
<dbReference type="Pfam" id="PF13710">
    <property type="entry name" value="ACT_5"/>
    <property type="match status" value="1"/>
</dbReference>
<dbReference type="SUPFAM" id="SSF55021">
    <property type="entry name" value="ACT-like"/>
    <property type="match status" value="1"/>
</dbReference>
<dbReference type="PROSITE" id="PS51671">
    <property type="entry name" value="ACT"/>
    <property type="match status" value="1"/>
</dbReference>
<comment type="catalytic activity">
    <reaction>
        <text>2 pyruvate + H(+) = (2S)-2-acetolactate + CO2</text>
        <dbReference type="Rhea" id="RHEA:25249"/>
        <dbReference type="ChEBI" id="CHEBI:15361"/>
        <dbReference type="ChEBI" id="CHEBI:15378"/>
        <dbReference type="ChEBI" id="CHEBI:16526"/>
        <dbReference type="ChEBI" id="CHEBI:58476"/>
        <dbReference type="EC" id="2.2.1.6"/>
    </reaction>
</comment>
<comment type="cofactor">
    <cofactor evidence="1">
        <name>Mg(2+)</name>
        <dbReference type="ChEBI" id="CHEBI:18420"/>
    </cofactor>
    <text evidence="1">Binds 1 Mg(2+) ion per subunit.</text>
</comment>
<comment type="cofactor">
    <cofactor evidence="1">
        <name>thiamine diphosphate</name>
        <dbReference type="ChEBI" id="CHEBI:58937"/>
    </cofactor>
    <text evidence="1">Binds 1 thiamine pyrophosphate per subunit.</text>
</comment>
<comment type="pathway">
    <text>Amino-acid biosynthesis; L-isoleucine biosynthesis; L-isoleucine from 2-oxobutanoate: step 1/4.</text>
</comment>
<comment type="pathway">
    <text>Amino-acid biosynthesis; L-valine biosynthesis; L-valine from pyruvate: step 1/4.</text>
</comment>
<comment type="subunit">
    <text evidence="1">Tetramer of two large and two small chains.</text>
</comment>
<gene>
    <name type="primary">ilvM</name>
    <name type="ordered locus">c4691</name>
</gene>
<accession>P0ADG2</accession>
<accession>P13048</accession>
<accession>P78269</accession>
<reference key="1">
    <citation type="journal article" date="2002" name="Proc. Natl. Acad. Sci. U.S.A.">
        <title>Extensive mosaic structure revealed by the complete genome sequence of uropathogenic Escherichia coli.</title>
        <authorList>
            <person name="Welch R.A."/>
            <person name="Burland V."/>
            <person name="Plunkett G. III"/>
            <person name="Redford P."/>
            <person name="Roesch P."/>
            <person name="Rasko D."/>
            <person name="Buckles E.L."/>
            <person name="Liou S.-R."/>
            <person name="Boutin A."/>
            <person name="Hackett J."/>
            <person name="Stroud D."/>
            <person name="Mayhew G.F."/>
            <person name="Rose D.J."/>
            <person name="Zhou S."/>
            <person name="Schwartz D.C."/>
            <person name="Perna N.T."/>
            <person name="Mobley H.L.T."/>
            <person name="Donnenberg M.S."/>
            <person name="Blattner F.R."/>
        </authorList>
    </citation>
    <scope>NUCLEOTIDE SEQUENCE [LARGE SCALE GENOMIC DNA]</scope>
    <source>
        <strain>CFT073 / ATCC 700928 / UPEC</strain>
    </source>
</reference>
<feature type="chain" id="PRO_0000151430" description="Acetolactate synthase isozyme 2 small subunit">
    <location>
        <begin position="1"/>
        <end position="87"/>
    </location>
</feature>
<feature type="domain" description="ACT" evidence="2">
    <location>
        <begin position="5"/>
        <end position="78"/>
    </location>
</feature>